<reference key="1">
    <citation type="journal article" date="1992" name="Gene">
        <title>Cloning and sequence of a gene encoding the L7/L12 ribosomal protein equivalent of Streptomyces antibioticus.</title>
        <authorList>
            <person name="Parra F."/>
            <person name="Blanco G."/>
            <person name="Alonso J.M."/>
            <person name="Balbin M."/>
            <person name="Mendez C."/>
            <person name="Salas J.A."/>
        </authorList>
    </citation>
    <scope>NUCLEOTIDE SEQUENCE [GENOMIC DNA]</scope>
</reference>
<gene>
    <name evidence="1" type="primary">rplL</name>
</gene>
<feature type="chain" id="PRO_0000157585" description="Large ribosomal subunit protein bL12">
    <location>
        <begin position="1"/>
        <end position="128"/>
    </location>
</feature>
<comment type="function">
    <text evidence="1">Forms part of the ribosomal stalk which helps the ribosome interact with GTP-bound translation factors. Is thus essential for accurate translation.</text>
</comment>
<comment type="subunit">
    <text evidence="1">Homodimer. Part of the ribosomal stalk of the 50S ribosomal subunit. Forms a multimeric L10(L12)X complex, where L10 forms an elongated spine to which 2 to 4 L12 dimers bind in a sequential fashion. Binds GTP-bound translation factors.</text>
</comment>
<comment type="similarity">
    <text evidence="1">Belongs to the bacterial ribosomal protein bL12 family.</text>
</comment>
<evidence type="ECO:0000255" key="1">
    <source>
        <dbReference type="HAMAP-Rule" id="MF_00368"/>
    </source>
</evidence>
<evidence type="ECO:0000305" key="2"/>
<name>RL7_STRAT</name>
<accession>P29342</accession>
<proteinExistence type="inferred from homology"/>
<sequence length="128" mass="13272">MALTQDELLAEFEGMTLIQLSEFVKAFEEKFDVTAAAAAPVVVAGGAAGGAAAEAEEEKDEFDVILTGAGDKKIQVIKVVRELTSLGLKEAKDLVDGTPKPVLEKVNKEAADKAAEALKGAGASVEVK</sequence>
<protein>
    <recommendedName>
        <fullName evidence="1">Large ribosomal subunit protein bL12</fullName>
    </recommendedName>
    <alternativeName>
        <fullName evidence="2">50S ribosomal protein L7/L12</fullName>
    </alternativeName>
</protein>
<keyword id="KW-0687">Ribonucleoprotein</keyword>
<keyword id="KW-0689">Ribosomal protein</keyword>
<dbReference type="EMBL" id="M89911">
    <property type="protein sequence ID" value="AAA26811.1"/>
    <property type="molecule type" value="Genomic_DNA"/>
</dbReference>
<dbReference type="PIR" id="JC1273">
    <property type="entry name" value="JC1273"/>
</dbReference>
<dbReference type="SMR" id="P29342"/>
<dbReference type="STRING" id="1890.AFM16_23040"/>
<dbReference type="GO" id="GO:0022625">
    <property type="term" value="C:cytosolic large ribosomal subunit"/>
    <property type="evidence" value="ECO:0007669"/>
    <property type="project" value="TreeGrafter"/>
</dbReference>
<dbReference type="GO" id="GO:0003729">
    <property type="term" value="F:mRNA binding"/>
    <property type="evidence" value="ECO:0007669"/>
    <property type="project" value="TreeGrafter"/>
</dbReference>
<dbReference type="GO" id="GO:0003735">
    <property type="term" value="F:structural constituent of ribosome"/>
    <property type="evidence" value="ECO:0007669"/>
    <property type="project" value="InterPro"/>
</dbReference>
<dbReference type="GO" id="GO:0006412">
    <property type="term" value="P:translation"/>
    <property type="evidence" value="ECO:0007669"/>
    <property type="project" value="UniProtKB-UniRule"/>
</dbReference>
<dbReference type="CDD" id="cd00387">
    <property type="entry name" value="Ribosomal_L7_L12"/>
    <property type="match status" value="1"/>
</dbReference>
<dbReference type="FunFam" id="3.30.1390.10:FF:000001">
    <property type="entry name" value="50S ribosomal protein L7/L12"/>
    <property type="match status" value="1"/>
</dbReference>
<dbReference type="Gene3D" id="3.30.1390.10">
    <property type="match status" value="1"/>
</dbReference>
<dbReference type="Gene3D" id="1.20.5.710">
    <property type="entry name" value="Single helix bin"/>
    <property type="match status" value="1"/>
</dbReference>
<dbReference type="HAMAP" id="MF_00368">
    <property type="entry name" value="Ribosomal_bL12"/>
    <property type="match status" value="1"/>
</dbReference>
<dbReference type="InterPro" id="IPR000206">
    <property type="entry name" value="Ribosomal_bL12"/>
</dbReference>
<dbReference type="InterPro" id="IPR013823">
    <property type="entry name" value="Ribosomal_bL12_C"/>
</dbReference>
<dbReference type="InterPro" id="IPR014719">
    <property type="entry name" value="Ribosomal_bL12_C/ClpS-like"/>
</dbReference>
<dbReference type="InterPro" id="IPR008932">
    <property type="entry name" value="Ribosomal_bL12_oligo"/>
</dbReference>
<dbReference type="InterPro" id="IPR036235">
    <property type="entry name" value="Ribosomal_bL12_oligo_N_sf"/>
</dbReference>
<dbReference type="NCBIfam" id="TIGR00855">
    <property type="entry name" value="L12"/>
    <property type="match status" value="1"/>
</dbReference>
<dbReference type="PANTHER" id="PTHR45987">
    <property type="entry name" value="39S RIBOSOMAL PROTEIN L12"/>
    <property type="match status" value="1"/>
</dbReference>
<dbReference type="PANTHER" id="PTHR45987:SF4">
    <property type="entry name" value="LARGE RIBOSOMAL SUBUNIT PROTEIN BL12M"/>
    <property type="match status" value="1"/>
</dbReference>
<dbReference type="Pfam" id="PF00542">
    <property type="entry name" value="Ribosomal_L12"/>
    <property type="match status" value="1"/>
</dbReference>
<dbReference type="Pfam" id="PF16320">
    <property type="entry name" value="Ribosomal_L12_N"/>
    <property type="match status" value="1"/>
</dbReference>
<dbReference type="SUPFAM" id="SSF54736">
    <property type="entry name" value="ClpS-like"/>
    <property type="match status" value="1"/>
</dbReference>
<dbReference type="SUPFAM" id="SSF48300">
    <property type="entry name" value="Ribosomal protein L7/12, oligomerisation (N-terminal) domain"/>
    <property type="match status" value="1"/>
</dbReference>
<organism>
    <name type="scientific">Streptomyces antibioticus</name>
    <dbReference type="NCBI Taxonomy" id="1890"/>
    <lineage>
        <taxon>Bacteria</taxon>
        <taxon>Bacillati</taxon>
        <taxon>Actinomycetota</taxon>
        <taxon>Actinomycetes</taxon>
        <taxon>Kitasatosporales</taxon>
        <taxon>Streptomycetaceae</taxon>
        <taxon>Streptomyces</taxon>
    </lineage>
</organism>